<gene>
    <name evidence="1" type="primary">rpsK</name>
    <name type="ordered locus">Fjoh_0373</name>
</gene>
<keyword id="KW-0687">Ribonucleoprotein</keyword>
<keyword id="KW-0689">Ribosomal protein</keyword>
<keyword id="KW-0694">RNA-binding</keyword>
<keyword id="KW-0699">rRNA-binding</keyword>
<proteinExistence type="inferred from homology"/>
<protein>
    <recommendedName>
        <fullName evidence="1">Small ribosomal subunit protein uS11</fullName>
    </recommendedName>
    <alternativeName>
        <fullName evidence="2">30S ribosomal protein S11</fullName>
    </alternativeName>
</protein>
<name>RS11_FLAJ1</name>
<dbReference type="EMBL" id="CP000685">
    <property type="protein sequence ID" value="ABQ03409.1"/>
    <property type="molecule type" value="Genomic_DNA"/>
</dbReference>
<dbReference type="RefSeq" id="WP_012022477.1">
    <property type="nucleotide sequence ID" value="NZ_MUGZ01000005.1"/>
</dbReference>
<dbReference type="SMR" id="A5FN17"/>
<dbReference type="STRING" id="376686.Fjoh_0373"/>
<dbReference type="KEGG" id="fjo:Fjoh_0373"/>
<dbReference type="eggNOG" id="COG0100">
    <property type="taxonomic scope" value="Bacteria"/>
</dbReference>
<dbReference type="HOGENOM" id="CLU_072439_5_3_10"/>
<dbReference type="OrthoDB" id="9806415at2"/>
<dbReference type="Proteomes" id="UP000006694">
    <property type="component" value="Chromosome"/>
</dbReference>
<dbReference type="GO" id="GO:1990904">
    <property type="term" value="C:ribonucleoprotein complex"/>
    <property type="evidence" value="ECO:0007669"/>
    <property type="project" value="UniProtKB-KW"/>
</dbReference>
<dbReference type="GO" id="GO:0005840">
    <property type="term" value="C:ribosome"/>
    <property type="evidence" value="ECO:0007669"/>
    <property type="project" value="UniProtKB-KW"/>
</dbReference>
<dbReference type="GO" id="GO:0019843">
    <property type="term" value="F:rRNA binding"/>
    <property type="evidence" value="ECO:0007669"/>
    <property type="project" value="UniProtKB-UniRule"/>
</dbReference>
<dbReference type="GO" id="GO:0003735">
    <property type="term" value="F:structural constituent of ribosome"/>
    <property type="evidence" value="ECO:0007669"/>
    <property type="project" value="InterPro"/>
</dbReference>
<dbReference type="GO" id="GO:0006412">
    <property type="term" value="P:translation"/>
    <property type="evidence" value="ECO:0007669"/>
    <property type="project" value="UniProtKB-UniRule"/>
</dbReference>
<dbReference type="FunFam" id="3.30.420.80:FF:000004">
    <property type="entry name" value="30S ribosomal protein S11"/>
    <property type="match status" value="1"/>
</dbReference>
<dbReference type="Gene3D" id="3.30.420.80">
    <property type="entry name" value="Ribosomal protein S11"/>
    <property type="match status" value="1"/>
</dbReference>
<dbReference type="HAMAP" id="MF_01310">
    <property type="entry name" value="Ribosomal_uS11"/>
    <property type="match status" value="1"/>
</dbReference>
<dbReference type="InterPro" id="IPR001971">
    <property type="entry name" value="Ribosomal_uS11"/>
</dbReference>
<dbReference type="InterPro" id="IPR019981">
    <property type="entry name" value="Ribosomal_uS11_bac-type"/>
</dbReference>
<dbReference type="InterPro" id="IPR018102">
    <property type="entry name" value="Ribosomal_uS11_CS"/>
</dbReference>
<dbReference type="InterPro" id="IPR036967">
    <property type="entry name" value="Ribosomal_uS11_sf"/>
</dbReference>
<dbReference type="NCBIfam" id="NF003698">
    <property type="entry name" value="PRK05309.1"/>
    <property type="match status" value="1"/>
</dbReference>
<dbReference type="NCBIfam" id="TIGR03632">
    <property type="entry name" value="uS11_bact"/>
    <property type="match status" value="1"/>
</dbReference>
<dbReference type="PANTHER" id="PTHR11759">
    <property type="entry name" value="40S RIBOSOMAL PROTEIN S14/30S RIBOSOMAL PROTEIN S11"/>
    <property type="match status" value="1"/>
</dbReference>
<dbReference type="Pfam" id="PF00411">
    <property type="entry name" value="Ribosomal_S11"/>
    <property type="match status" value="1"/>
</dbReference>
<dbReference type="PIRSF" id="PIRSF002131">
    <property type="entry name" value="Ribosomal_S11"/>
    <property type="match status" value="1"/>
</dbReference>
<dbReference type="SUPFAM" id="SSF53137">
    <property type="entry name" value="Translational machinery components"/>
    <property type="match status" value="1"/>
</dbReference>
<dbReference type="PROSITE" id="PS00054">
    <property type="entry name" value="RIBOSOMAL_S11"/>
    <property type="match status" value="1"/>
</dbReference>
<comment type="function">
    <text evidence="1">Located on the platform of the 30S subunit, it bridges several disparate RNA helices of the 16S rRNA. Forms part of the Shine-Dalgarno cleft in the 70S ribosome.</text>
</comment>
<comment type="subunit">
    <text evidence="1">Part of the 30S ribosomal subunit. Interacts with proteins S7 and S18. Binds to IF-3.</text>
</comment>
<comment type="similarity">
    <text evidence="1">Belongs to the universal ribosomal protein uS11 family.</text>
</comment>
<evidence type="ECO:0000255" key="1">
    <source>
        <dbReference type="HAMAP-Rule" id="MF_01310"/>
    </source>
</evidence>
<evidence type="ECO:0000305" key="2"/>
<organism>
    <name type="scientific">Flavobacterium johnsoniae (strain ATCC 17061 / DSM 2064 / JCM 8514 / BCRC 14874 / CCUG 350202 / NBRC 14942 / NCIMB 11054 / UW101)</name>
    <name type="common">Cytophaga johnsonae</name>
    <dbReference type="NCBI Taxonomy" id="376686"/>
    <lineage>
        <taxon>Bacteria</taxon>
        <taxon>Pseudomonadati</taxon>
        <taxon>Bacteroidota</taxon>
        <taxon>Flavobacteriia</taxon>
        <taxon>Flavobacteriales</taxon>
        <taxon>Flavobacteriaceae</taxon>
        <taxon>Flavobacterium</taxon>
    </lineage>
</organism>
<sequence>MAKATAKKRKVIVESTGEAHISSTFNNIIISLTNKKGEVIAWSSAGKMGFRGSKKNTPYAAQMAAEDCSKVALEAGLKKVKVYVKGPGNGRESAIRSIHNGGIEVTEIIDVTPMPHNGCRPPKRRRV</sequence>
<accession>A5FN17</accession>
<reference key="1">
    <citation type="journal article" date="2009" name="Appl. Environ. Microbiol.">
        <title>Novel features of the polysaccharide-digesting gliding bacterium Flavobacterium johnsoniae as revealed by genome sequence analysis.</title>
        <authorList>
            <person name="McBride M.J."/>
            <person name="Xie G."/>
            <person name="Martens E.C."/>
            <person name="Lapidus A."/>
            <person name="Henrissat B."/>
            <person name="Rhodes R.G."/>
            <person name="Goltsman E."/>
            <person name="Wang W."/>
            <person name="Xu J."/>
            <person name="Hunnicutt D.W."/>
            <person name="Staroscik A.M."/>
            <person name="Hoover T.R."/>
            <person name="Cheng Y.Q."/>
            <person name="Stein J.L."/>
        </authorList>
    </citation>
    <scope>NUCLEOTIDE SEQUENCE [LARGE SCALE GENOMIC DNA]</scope>
    <source>
        <strain>ATCC 17061 / DSM 2064 / JCM 8514 / BCRC 14874 / CCUG 350202 / NBRC 14942 / NCIMB 11054 / UW101</strain>
    </source>
</reference>
<feature type="chain" id="PRO_1000086190" description="Small ribosomal subunit protein uS11">
    <location>
        <begin position="1"/>
        <end position="127"/>
    </location>
</feature>